<reference key="1">
    <citation type="journal article" date="1998" name="Nature">
        <title>The complete genome of the hyperthermophilic bacterium Aquifex aeolicus.</title>
        <authorList>
            <person name="Deckert G."/>
            <person name="Warren P.V."/>
            <person name="Gaasterland T."/>
            <person name="Young W.G."/>
            <person name="Lenox A.L."/>
            <person name="Graham D.E."/>
            <person name="Overbeek R."/>
            <person name="Snead M.A."/>
            <person name="Keller M."/>
            <person name="Aujay M."/>
            <person name="Huber R."/>
            <person name="Feldman R.A."/>
            <person name="Short J.M."/>
            <person name="Olsen G.J."/>
            <person name="Swanson R.V."/>
        </authorList>
    </citation>
    <scope>NUCLEOTIDE SEQUENCE [LARGE SCALE GENOMIC DNA]</scope>
    <source>
        <strain>VF5</strain>
    </source>
</reference>
<dbReference type="EMBL" id="AE000657">
    <property type="protein sequence ID" value="AAC06829.1"/>
    <property type="molecule type" value="Genomic_DNA"/>
</dbReference>
<dbReference type="PIR" id="A70354">
    <property type="entry name" value="A70354"/>
</dbReference>
<dbReference type="RefSeq" id="NP_213421.1">
    <property type="nucleotide sequence ID" value="NC_000918.1"/>
</dbReference>
<dbReference type="RefSeq" id="WP_010880359.1">
    <property type="nucleotide sequence ID" value="NC_000918.1"/>
</dbReference>
<dbReference type="SMR" id="O66861"/>
<dbReference type="STRING" id="224324.aq_603"/>
<dbReference type="EnsemblBacteria" id="AAC06829">
    <property type="protein sequence ID" value="AAC06829"/>
    <property type="gene ID" value="aq_603"/>
</dbReference>
<dbReference type="KEGG" id="aae:aq_603"/>
<dbReference type="PATRIC" id="fig|224324.8.peg.492"/>
<dbReference type="HOGENOM" id="CLU_1021747_0_0_0"/>
<dbReference type="InParanoid" id="O66861"/>
<dbReference type="Proteomes" id="UP000000798">
    <property type="component" value="Chromosome"/>
</dbReference>
<dbReference type="GO" id="GO:0003677">
    <property type="term" value="F:DNA binding"/>
    <property type="evidence" value="ECO:0007669"/>
    <property type="project" value="UniProtKB-KW"/>
</dbReference>
<dbReference type="GO" id="GO:0006355">
    <property type="term" value="P:regulation of DNA-templated transcription"/>
    <property type="evidence" value="ECO:0007669"/>
    <property type="project" value="InterPro"/>
</dbReference>
<dbReference type="Gene3D" id="3.60.15.10">
    <property type="entry name" value="Ribonuclease Z/Hydroxyacylglutathione hydrolase-like"/>
    <property type="match status" value="1"/>
</dbReference>
<dbReference type="InterPro" id="IPR000551">
    <property type="entry name" value="MerR-type_HTH_dom"/>
</dbReference>
<dbReference type="InterPro" id="IPR036866">
    <property type="entry name" value="RibonucZ/Hydroxyglut_hydro"/>
</dbReference>
<dbReference type="SUPFAM" id="SSF56281">
    <property type="entry name" value="Metallo-hydrolase/oxidoreductase"/>
    <property type="match status" value="1"/>
</dbReference>
<dbReference type="PROSITE" id="PS50937">
    <property type="entry name" value="HTH_MERR_2"/>
    <property type="match status" value="1"/>
</dbReference>
<keyword id="KW-0238">DNA-binding</keyword>
<keyword id="KW-1185">Reference proteome</keyword>
<keyword id="KW-0804">Transcription</keyword>
<keyword id="KW-0805">Transcription regulation</keyword>
<sequence length="272" mass="31256">MDTLAFINRALVEEGYSLKDIKLVLITDFEPSSVEAIRRLLAVNQGVSFIGRKYVKEVLEKFGLRNVRFRAVEEIPSLEFKLPESGTVKVLPFRNSPQEASAGYLLEEERILFSGKFLGSFGEKGDTIQIFHRVFFPCRNILDYNVGLLESIGEEFEVFPFYGEKQKLSAKTLKEYFNYTVKGSVLEREVILGLVNGVLLNLSDEERENLLSSIGYLAEVDDKVIVDFYTEPNLFYEEFVNTLPDAVKSKEEFYRIVEKLLEHNFYVPLRAV</sequence>
<gene>
    <name type="ordered locus">aq_603</name>
</gene>
<protein>
    <recommendedName>
        <fullName>Uncharacterized HTH-type transcriptional regulator aq_603</fullName>
    </recommendedName>
</protein>
<evidence type="ECO:0000255" key="1">
    <source>
        <dbReference type="PROSITE-ProRule" id="PRU00254"/>
    </source>
</evidence>
<feature type="chain" id="PRO_0000098163" description="Uncharacterized HTH-type transcriptional regulator aq_603">
    <location>
        <begin position="1"/>
        <end position="272"/>
    </location>
</feature>
<feature type="domain" description="HTH merR-type" evidence="1">
    <location>
        <begin position="1"/>
        <end position="27"/>
    </location>
</feature>
<name>Y603_AQUAE</name>
<organism>
    <name type="scientific">Aquifex aeolicus (strain VF5)</name>
    <dbReference type="NCBI Taxonomy" id="224324"/>
    <lineage>
        <taxon>Bacteria</taxon>
        <taxon>Pseudomonadati</taxon>
        <taxon>Aquificota</taxon>
        <taxon>Aquificia</taxon>
        <taxon>Aquificales</taxon>
        <taxon>Aquificaceae</taxon>
        <taxon>Aquifex</taxon>
    </lineage>
</organism>
<proteinExistence type="predicted"/>
<accession>O66861</accession>